<dbReference type="EMBL" id="Y16752">
    <property type="protein sequence ID" value="CAA76365.1"/>
    <property type="molecule type" value="mRNA"/>
</dbReference>
<dbReference type="EMBL" id="AK289477">
    <property type="protein sequence ID" value="BAF82166.1"/>
    <property type="molecule type" value="mRNA"/>
</dbReference>
<dbReference type="EMBL" id="AL512384">
    <property type="status" value="NOT_ANNOTATED_CDS"/>
    <property type="molecule type" value="Genomic_DNA"/>
</dbReference>
<dbReference type="EMBL" id="AL022170">
    <property type="status" value="NOT_ANNOTATED_CDS"/>
    <property type="molecule type" value="Genomic_DNA"/>
</dbReference>
<dbReference type="EMBL" id="CH471087">
    <property type="protein sequence ID" value="EAW55487.1"/>
    <property type="molecule type" value="Genomic_DNA"/>
</dbReference>
<dbReference type="EMBL" id="BC000336">
    <property type="protein sequence ID" value="AAH00336.1"/>
    <property type="molecule type" value="mRNA"/>
</dbReference>
<dbReference type="EMBL" id="BC003036">
    <property type="protein sequence ID" value="AAH03036.1"/>
    <property type="molecule type" value="mRNA"/>
</dbReference>
<dbReference type="CCDS" id="CCDS4561.1"/>
<dbReference type="RefSeq" id="NP_008929.2">
    <property type="nucleotide sequence ID" value="NM_006998.3"/>
</dbReference>
<dbReference type="PDB" id="8BAV">
    <property type="method" value="X-ray"/>
    <property type="resolution" value="2.30 A"/>
    <property type="chains" value="C/D=1-276"/>
</dbReference>
<dbReference type="PDBsum" id="8BAV"/>
<dbReference type="SMR" id="O76038"/>
<dbReference type="BioGRID" id="115839">
    <property type="interactions" value="77"/>
</dbReference>
<dbReference type="FunCoup" id="O76038">
    <property type="interactions" value="65"/>
</dbReference>
<dbReference type="IntAct" id="O76038">
    <property type="interactions" value="68"/>
</dbReference>
<dbReference type="MINT" id="O76038"/>
<dbReference type="STRING" id="9606.ENSP00000367197"/>
<dbReference type="GlyGen" id="O76038">
    <property type="glycosylation" value="3 sites, 1 O-linked glycan (3 sites)"/>
</dbReference>
<dbReference type="iPTMnet" id="O76038"/>
<dbReference type="PhosphoSitePlus" id="O76038"/>
<dbReference type="SwissPalm" id="O76038"/>
<dbReference type="BioMuta" id="SCGN"/>
<dbReference type="jPOST" id="O76038"/>
<dbReference type="MassIVE" id="O76038"/>
<dbReference type="PaxDb" id="9606-ENSP00000367197"/>
<dbReference type="PeptideAtlas" id="O76038"/>
<dbReference type="ProteomicsDB" id="50358"/>
<dbReference type="Antibodypedia" id="1357">
    <property type="antibodies" value="352 antibodies from 35 providers"/>
</dbReference>
<dbReference type="DNASU" id="10590"/>
<dbReference type="Ensembl" id="ENST00000377961.3">
    <property type="protein sequence ID" value="ENSP00000367197.2"/>
    <property type="gene ID" value="ENSG00000079689.15"/>
</dbReference>
<dbReference type="GeneID" id="10590"/>
<dbReference type="KEGG" id="hsa:10590"/>
<dbReference type="MANE-Select" id="ENST00000377961.3">
    <property type="protein sequence ID" value="ENSP00000367197.2"/>
    <property type="RefSeq nucleotide sequence ID" value="NM_006998.4"/>
    <property type="RefSeq protein sequence ID" value="NP_008929.2"/>
</dbReference>
<dbReference type="UCSC" id="uc003nfb.4">
    <property type="organism name" value="human"/>
</dbReference>
<dbReference type="AGR" id="HGNC:16941"/>
<dbReference type="CTD" id="10590"/>
<dbReference type="DisGeNET" id="10590"/>
<dbReference type="GeneCards" id="SCGN"/>
<dbReference type="HGNC" id="HGNC:16941">
    <property type="gene designation" value="SCGN"/>
</dbReference>
<dbReference type="HPA" id="ENSG00000079689">
    <property type="expression patterns" value="Tissue enhanced (brain, pancreas, pituitary gland)"/>
</dbReference>
<dbReference type="MIM" id="609202">
    <property type="type" value="gene"/>
</dbReference>
<dbReference type="neXtProt" id="NX_O76038"/>
<dbReference type="OpenTargets" id="ENSG00000079689"/>
<dbReference type="PharmGKB" id="PA38428"/>
<dbReference type="VEuPathDB" id="HostDB:ENSG00000079689"/>
<dbReference type="eggNOG" id="KOG0027">
    <property type="taxonomic scope" value="Eukaryota"/>
</dbReference>
<dbReference type="GeneTree" id="ENSGT00950000183108"/>
<dbReference type="HOGENOM" id="CLU_054826_1_1_1"/>
<dbReference type="InParanoid" id="O76038"/>
<dbReference type="OMA" id="GFWQIWQ"/>
<dbReference type="OrthoDB" id="428774at2759"/>
<dbReference type="PAN-GO" id="O76038">
    <property type="GO annotations" value="8 GO annotations based on evolutionary models"/>
</dbReference>
<dbReference type="PhylomeDB" id="O76038"/>
<dbReference type="TreeFam" id="TF325083"/>
<dbReference type="PathwayCommons" id="O76038"/>
<dbReference type="SignaLink" id="O76038"/>
<dbReference type="BioGRID-ORCS" id="10590">
    <property type="hits" value="9 hits in 1139 CRISPR screens"/>
</dbReference>
<dbReference type="ChiTaRS" id="SCGN">
    <property type="organism name" value="human"/>
</dbReference>
<dbReference type="GeneWiki" id="SCGN"/>
<dbReference type="GenomeRNAi" id="10590"/>
<dbReference type="Pharos" id="O76038">
    <property type="development level" value="Tbio"/>
</dbReference>
<dbReference type="PRO" id="PR:O76038"/>
<dbReference type="Proteomes" id="UP000005640">
    <property type="component" value="Chromosome 6"/>
</dbReference>
<dbReference type="RNAct" id="O76038">
    <property type="molecule type" value="protein"/>
</dbReference>
<dbReference type="Bgee" id="ENSG00000079689">
    <property type="expression patterns" value="Expressed in islet of Langerhans and 108 other cell types or tissues"/>
</dbReference>
<dbReference type="ExpressionAtlas" id="O76038">
    <property type="expression patterns" value="baseline and differential"/>
</dbReference>
<dbReference type="GO" id="GO:0005737">
    <property type="term" value="C:cytoplasm"/>
    <property type="evidence" value="ECO:0000303"/>
    <property type="project" value="UniProtKB"/>
</dbReference>
<dbReference type="GO" id="GO:0005829">
    <property type="term" value="C:cytosol"/>
    <property type="evidence" value="ECO:0000318"/>
    <property type="project" value="GO_Central"/>
</dbReference>
<dbReference type="GO" id="GO:0030425">
    <property type="term" value="C:dendrite"/>
    <property type="evidence" value="ECO:0000318"/>
    <property type="project" value="GO_Central"/>
</dbReference>
<dbReference type="GO" id="GO:0005576">
    <property type="term" value="C:extracellular region"/>
    <property type="evidence" value="ECO:0007669"/>
    <property type="project" value="UniProtKB-SubCell"/>
</dbReference>
<dbReference type="GO" id="GO:0005634">
    <property type="term" value="C:nucleus"/>
    <property type="evidence" value="ECO:0000318"/>
    <property type="project" value="GO_Central"/>
</dbReference>
<dbReference type="GO" id="GO:0045202">
    <property type="term" value="C:synapse"/>
    <property type="evidence" value="ECO:0000318"/>
    <property type="project" value="GO_Central"/>
</dbReference>
<dbReference type="GO" id="GO:0043195">
    <property type="term" value="C:terminal bouton"/>
    <property type="evidence" value="ECO:0000318"/>
    <property type="project" value="GO_Central"/>
</dbReference>
<dbReference type="GO" id="GO:0030658">
    <property type="term" value="C:transport vesicle membrane"/>
    <property type="evidence" value="ECO:0007669"/>
    <property type="project" value="UniProtKB-SubCell"/>
</dbReference>
<dbReference type="GO" id="GO:0005509">
    <property type="term" value="F:calcium ion binding"/>
    <property type="evidence" value="ECO:0000318"/>
    <property type="project" value="GO_Central"/>
</dbReference>
<dbReference type="CDD" id="cd16178">
    <property type="entry name" value="EFh_HEF_SCGN"/>
    <property type="match status" value="1"/>
</dbReference>
<dbReference type="FunFam" id="1.10.238.10:FF:000142">
    <property type="entry name" value="Secretagogin"/>
    <property type="match status" value="1"/>
</dbReference>
<dbReference type="FunFam" id="1.10.238.10:FF:000186">
    <property type="entry name" value="Secretagogin"/>
    <property type="match status" value="1"/>
</dbReference>
<dbReference type="FunFam" id="1.10.238.10:FF:000222">
    <property type="entry name" value="Secretagogin"/>
    <property type="match status" value="1"/>
</dbReference>
<dbReference type="Gene3D" id="1.10.238.10">
    <property type="entry name" value="EF-hand"/>
    <property type="match status" value="3"/>
</dbReference>
<dbReference type="InterPro" id="IPR051001">
    <property type="entry name" value="Calbindin_Ca-bind"/>
</dbReference>
<dbReference type="InterPro" id="IPR011992">
    <property type="entry name" value="EF-hand-dom_pair"/>
</dbReference>
<dbReference type="InterPro" id="IPR018247">
    <property type="entry name" value="EF_Hand_1_Ca_BS"/>
</dbReference>
<dbReference type="InterPro" id="IPR002048">
    <property type="entry name" value="EF_hand_dom"/>
</dbReference>
<dbReference type="InterPro" id="IPR035798">
    <property type="entry name" value="EFh_SCGN"/>
</dbReference>
<dbReference type="PANTHER" id="PTHR19972">
    <property type="entry name" value="CALBINDIN"/>
    <property type="match status" value="1"/>
</dbReference>
<dbReference type="PANTHER" id="PTHR19972:SF15">
    <property type="entry name" value="SECRETAGOGIN"/>
    <property type="match status" value="1"/>
</dbReference>
<dbReference type="Pfam" id="PF13202">
    <property type="entry name" value="EF-hand_5"/>
    <property type="match status" value="1"/>
</dbReference>
<dbReference type="Pfam" id="PF13499">
    <property type="entry name" value="EF-hand_7"/>
    <property type="match status" value="1"/>
</dbReference>
<dbReference type="SMART" id="SM00054">
    <property type="entry name" value="EFh"/>
    <property type="match status" value="5"/>
</dbReference>
<dbReference type="SUPFAM" id="SSF47473">
    <property type="entry name" value="EF-hand"/>
    <property type="match status" value="2"/>
</dbReference>
<dbReference type="PROSITE" id="PS00018">
    <property type="entry name" value="EF_HAND_1"/>
    <property type="match status" value="4"/>
</dbReference>
<dbReference type="PROSITE" id="PS50222">
    <property type="entry name" value="EF_HAND_2"/>
    <property type="match status" value="6"/>
</dbReference>
<reference key="1">
    <citation type="journal article" date="2000" name="J. Biol. Chem.">
        <title>Cloning and expression of secretagogin, a novel neuroendocrine- and pancreatic islet of Langerhans-specific Ca2+-binding protein.</title>
        <authorList>
            <person name="Wagner L."/>
            <person name="Oliyarnyk O."/>
            <person name="Gartner W."/>
            <person name="Nowotny P."/>
            <person name="Groeger M."/>
            <person name="Kaserer K."/>
            <person name="Waldhaeusl W."/>
            <person name="Pasternack M.S."/>
        </authorList>
    </citation>
    <scope>NUCLEOTIDE SEQUENCE [MRNA]</scope>
    <source>
        <tissue>Pancreatic islet</tissue>
    </source>
</reference>
<reference key="2">
    <citation type="journal article" date="2004" name="Nat. Genet.">
        <title>Complete sequencing and characterization of 21,243 full-length human cDNAs.</title>
        <authorList>
            <person name="Ota T."/>
            <person name="Suzuki Y."/>
            <person name="Nishikawa T."/>
            <person name="Otsuki T."/>
            <person name="Sugiyama T."/>
            <person name="Irie R."/>
            <person name="Wakamatsu A."/>
            <person name="Hayashi K."/>
            <person name="Sato H."/>
            <person name="Nagai K."/>
            <person name="Kimura K."/>
            <person name="Makita H."/>
            <person name="Sekine M."/>
            <person name="Obayashi M."/>
            <person name="Nishi T."/>
            <person name="Shibahara T."/>
            <person name="Tanaka T."/>
            <person name="Ishii S."/>
            <person name="Yamamoto J."/>
            <person name="Saito K."/>
            <person name="Kawai Y."/>
            <person name="Isono Y."/>
            <person name="Nakamura Y."/>
            <person name="Nagahari K."/>
            <person name="Murakami K."/>
            <person name="Yasuda T."/>
            <person name="Iwayanagi T."/>
            <person name="Wagatsuma M."/>
            <person name="Shiratori A."/>
            <person name="Sudo H."/>
            <person name="Hosoiri T."/>
            <person name="Kaku Y."/>
            <person name="Kodaira H."/>
            <person name="Kondo H."/>
            <person name="Sugawara M."/>
            <person name="Takahashi M."/>
            <person name="Kanda K."/>
            <person name="Yokoi T."/>
            <person name="Furuya T."/>
            <person name="Kikkawa E."/>
            <person name="Omura Y."/>
            <person name="Abe K."/>
            <person name="Kamihara K."/>
            <person name="Katsuta N."/>
            <person name="Sato K."/>
            <person name="Tanikawa M."/>
            <person name="Yamazaki M."/>
            <person name="Ninomiya K."/>
            <person name="Ishibashi T."/>
            <person name="Yamashita H."/>
            <person name="Murakawa K."/>
            <person name="Fujimori K."/>
            <person name="Tanai H."/>
            <person name="Kimata M."/>
            <person name="Watanabe M."/>
            <person name="Hiraoka S."/>
            <person name="Chiba Y."/>
            <person name="Ishida S."/>
            <person name="Ono Y."/>
            <person name="Takiguchi S."/>
            <person name="Watanabe S."/>
            <person name="Yosida M."/>
            <person name="Hotuta T."/>
            <person name="Kusano J."/>
            <person name="Kanehori K."/>
            <person name="Takahashi-Fujii A."/>
            <person name="Hara H."/>
            <person name="Tanase T.-O."/>
            <person name="Nomura Y."/>
            <person name="Togiya S."/>
            <person name="Komai F."/>
            <person name="Hara R."/>
            <person name="Takeuchi K."/>
            <person name="Arita M."/>
            <person name="Imose N."/>
            <person name="Musashino K."/>
            <person name="Yuuki H."/>
            <person name="Oshima A."/>
            <person name="Sasaki N."/>
            <person name="Aotsuka S."/>
            <person name="Yoshikawa Y."/>
            <person name="Matsunawa H."/>
            <person name="Ichihara T."/>
            <person name="Shiohata N."/>
            <person name="Sano S."/>
            <person name="Moriya S."/>
            <person name="Momiyama H."/>
            <person name="Satoh N."/>
            <person name="Takami S."/>
            <person name="Terashima Y."/>
            <person name="Suzuki O."/>
            <person name="Nakagawa S."/>
            <person name="Senoh A."/>
            <person name="Mizoguchi H."/>
            <person name="Goto Y."/>
            <person name="Shimizu F."/>
            <person name="Wakebe H."/>
            <person name="Hishigaki H."/>
            <person name="Watanabe T."/>
            <person name="Sugiyama A."/>
            <person name="Takemoto M."/>
            <person name="Kawakami B."/>
            <person name="Yamazaki M."/>
            <person name="Watanabe K."/>
            <person name="Kumagai A."/>
            <person name="Itakura S."/>
            <person name="Fukuzumi Y."/>
            <person name="Fujimori Y."/>
            <person name="Komiyama M."/>
            <person name="Tashiro H."/>
            <person name="Tanigami A."/>
            <person name="Fujiwara T."/>
            <person name="Ono T."/>
            <person name="Yamada K."/>
            <person name="Fujii Y."/>
            <person name="Ozaki K."/>
            <person name="Hirao M."/>
            <person name="Ohmori Y."/>
            <person name="Kawabata A."/>
            <person name="Hikiji T."/>
            <person name="Kobatake N."/>
            <person name="Inagaki H."/>
            <person name="Ikema Y."/>
            <person name="Okamoto S."/>
            <person name="Okitani R."/>
            <person name="Kawakami T."/>
            <person name="Noguchi S."/>
            <person name="Itoh T."/>
            <person name="Shigeta K."/>
            <person name="Senba T."/>
            <person name="Matsumura K."/>
            <person name="Nakajima Y."/>
            <person name="Mizuno T."/>
            <person name="Morinaga M."/>
            <person name="Sasaki M."/>
            <person name="Togashi T."/>
            <person name="Oyama M."/>
            <person name="Hata H."/>
            <person name="Watanabe M."/>
            <person name="Komatsu T."/>
            <person name="Mizushima-Sugano J."/>
            <person name="Satoh T."/>
            <person name="Shirai Y."/>
            <person name="Takahashi Y."/>
            <person name="Nakagawa K."/>
            <person name="Okumura K."/>
            <person name="Nagase T."/>
            <person name="Nomura N."/>
            <person name="Kikuchi H."/>
            <person name="Masuho Y."/>
            <person name="Yamashita R."/>
            <person name="Nakai K."/>
            <person name="Yada T."/>
            <person name="Nakamura Y."/>
            <person name="Ohara O."/>
            <person name="Isogai T."/>
            <person name="Sugano S."/>
        </authorList>
    </citation>
    <scope>NUCLEOTIDE SEQUENCE [LARGE SCALE MRNA]</scope>
    <source>
        <tissue>Cerebellum</tissue>
    </source>
</reference>
<reference key="3">
    <citation type="journal article" date="2003" name="Nature">
        <title>The DNA sequence and analysis of human chromosome 6.</title>
        <authorList>
            <person name="Mungall A.J."/>
            <person name="Palmer S.A."/>
            <person name="Sims S.K."/>
            <person name="Edwards C.A."/>
            <person name="Ashurst J.L."/>
            <person name="Wilming L."/>
            <person name="Jones M.C."/>
            <person name="Horton R."/>
            <person name="Hunt S.E."/>
            <person name="Scott C.E."/>
            <person name="Gilbert J.G.R."/>
            <person name="Clamp M.E."/>
            <person name="Bethel G."/>
            <person name="Milne S."/>
            <person name="Ainscough R."/>
            <person name="Almeida J.P."/>
            <person name="Ambrose K.D."/>
            <person name="Andrews T.D."/>
            <person name="Ashwell R.I.S."/>
            <person name="Babbage A.K."/>
            <person name="Bagguley C.L."/>
            <person name="Bailey J."/>
            <person name="Banerjee R."/>
            <person name="Barker D.J."/>
            <person name="Barlow K.F."/>
            <person name="Bates K."/>
            <person name="Beare D.M."/>
            <person name="Beasley H."/>
            <person name="Beasley O."/>
            <person name="Bird C.P."/>
            <person name="Blakey S.E."/>
            <person name="Bray-Allen S."/>
            <person name="Brook J."/>
            <person name="Brown A.J."/>
            <person name="Brown J.Y."/>
            <person name="Burford D.C."/>
            <person name="Burrill W."/>
            <person name="Burton J."/>
            <person name="Carder C."/>
            <person name="Carter N.P."/>
            <person name="Chapman J.C."/>
            <person name="Clark S.Y."/>
            <person name="Clark G."/>
            <person name="Clee C.M."/>
            <person name="Clegg S."/>
            <person name="Cobley V."/>
            <person name="Collier R.E."/>
            <person name="Collins J.E."/>
            <person name="Colman L.K."/>
            <person name="Corby N.R."/>
            <person name="Coville G.J."/>
            <person name="Culley K.M."/>
            <person name="Dhami P."/>
            <person name="Davies J."/>
            <person name="Dunn M."/>
            <person name="Earthrowl M.E."/>
            <person name="Ellington A.E."/>
            <person name="Evans K.A."/>
            <person name="Faulkner L."/>
            <person name="Francis M.D."/>
            <person name="Frankish A."/>
            <person name="Frankland J."/>
            <person name="French L."/>
            <person name="Garner P."/>
            <person name="Garnett J."/>
            <person name="Ghori M.J."/>
            <person name="Gilby L.M."/>
            <person name="Gillson C.J."/>
            <person name="Glithero R.J."/>
            <person name="Grafham D.V."/>
            <person name="Grant M."/>
            <person name="Gribble S."/>
            <person name="Griffiths C."/>
            <person name="Griffiths M.N.D."/>
            <person name="Hall R."/>
            <person name="Halls K.S."/>
            <person name="Hammond S."/>
            <person name="Harley J.L."/>
            <person name="Hart E.A."/>
            <person name="Heath P.D."/>
            <person name="Heathcott R."/>
            <person name="Holmes S.J."/>
            <person name="Howden P.J."/>
            <person name="Howe K.L."/>
            <person name="Howell G.R."/>
            <person name="Huckle E."/>
            <person name="Humphray S.J."/>
            <person name="Humphries M.D."/>
            <person name="Hunt A.R."/>
            <person name="Johnson C.M."/>
            <person name="Joy A.A."/>
            <person name="Kay M."/>
            <person name="Keenan S.J."/>
            <person name="Kimberley A.M."/>
            <person name="King A."/>
            <person name="Laird G.K."/>
            <person name="Langford C."/>
            <person name="Lawlor S."/>
            <person name="Leongamornlert D.A."/>
            <person name="Leversha M."/>
            <person name="Lloyd C.R."/>
            <person name="Lloyd D.M."/>
            <person name="Loveland J.E."/>
            <person name="Lovell J."/>
            <person name="Martin S."/>
            <person name="Mashreghi-Mohammadi M."/>
            <person name="Maslen G.L."/>
            <person name="Matthews L."/>
            <person name="McCann O.T."/>
            <person name="McLaren S.J."/>
            <person name="McLay K."/>
            <person name="McMurray A."/>
            <person name="Moore M.J.F."/>
            <person name="Mullikin J.C."/>
            <person name="Niblett D."/>
            <person name="Nickerson T."/>
            <person name="Novik K.L."/>
            <person name="Oliver K."/>
            <person name="Overton-Larty E.K."/>
            <person name="Parker A."/>
            <person name="Patel R."/>
            <person name="Pearce A.V."/>
            <person name="Peck A.I."/>
            <person name="Phillimore B.J.C.T."/>
            <person name="Phillips S."/>
            <person name="Plumb R.W."/>
            <person name="Porter K.M."/>
            <person name="Ramsey Y."/>
            <person name="Ranby S.A."/>
            <person name="Rice C.M."/>
            <person name="Ross M.T."/>
            <person name="Searle S.M."/>
            <person name="Sehra H.K."/>
            <person name="Sheridan E."/>
            <person name="Skuce C.D."/>
            <person name="Smith S."/>
            <person name="Smith M."/>
            <person name="Spraggon L."/>
            <person name="Squares S.L."/>
            <person name="Steward C.A."/>
            <person name="Sycamore N."/>
            <person name="Tamlyn-Hall G."/>
            <person name="Tester J."/>
            <person name="Theaker A.J."/>
            <person name="Thomas D.W."/>
            <person name="Thorpe A."/>
            <person name="Tracey A."/>
            <person name="Tromans A."/>
            <person name="Tubby B."/>
            <person name="Wall M."/>
            <person name="Wallis J.M."/>
            <person name="West A.P."/>
            <person name="White S.S."/>
            <person name="Whitehead S.L."/>
            <person name="Whittaker H."/>
            <person name="Wild A."/>
            <person name="Willey D.J."/>
            <person name="Wilmer T.E."/>
            <person name="Wood J.M."/>
            <person name="Wray P.W."/>
            <person name="Wyatt J.C."/>
            <person name="Young L."/>
            <person name="Younger R.M."/>
            <person name="Bentley D.R."/>
            <person name="Coulson A."/>
            <person name="Durbin R.M."/>
            <person name="Hubbard T."/>
            <person name="Sulston J.E."/>
            <person name="Dunham I."/>
            <person name="Rogers J."/>
            <person name="Beck S."/>
        </authorList>
    </citation>
    <scope>NUCLEOTIDE SEQUENCE [LARGE SCALE GENOMIC DNA]</scope>
</reference>
<reference key="4">
    <citation type="submission" date="2005-07" db="EMBL/GenBank/DDBJ databases">
        <authorList>
            <person name="Mural R.J."/>
            <person name="Istrail S."/>
            <person name="Sutton G.G."/>
            <person name="Florea L."/>
            <person name="Halpern A.L."/>
            <person name="Mobarry C.M."/>
            <person name="Lippert R."/>
            <person name="Walenz B."/>
            <person name="Shatkay H."/>
            <person name="Dew I."/>
            <person name="Miller J.R."/>
            <person name="Flanigan M.J."/>
            <person name="Edwards N.J."/>
            <person name="Bolanos R."/>
            <person name="Fasulo D."/>
            <person name="Halldorsson B.V."/>
            <person name="Hannenhalli S."/>
            <person name="Turner R."/>
            <person name="Yooseph S."/>
            <person name="Lu F."/>
            <person name="Nusskern D.R."/>
            <person name="Shue B.C."/>
            <person name="Zheng X.H."/>
            <person name="Zhong F."/>
            <person name="Delcher A.L."/>
            <person name="Huson D.H."/>
            <person name="Kravitz S.A."/>
            <person name="Mouchard L."/>
            <person name="Reinert K."/>
            <person name="Remington K.A."/>
            <person name="Clark A.G."/>
            <person name="Waterman M.S."/>
            <person name="Eichler E.E."/>
            <person name="Adams M.D."/>
            <person name="Hunkapiller M.W."/>
            <person name="Myers E.W."/>
            <person name="Venter J.C."/>
        </authorList>
    </citation>
    <scope>NUCLEOTIDE SEQUENCE [LARGE SCALE GENOMIC DNA]</scope>
</reference>
<reference key="5">
    <citation type="journal article" date="2004" name="Genome Res.">
        <title>The status, quality, and expansion of the NIH full-length cDNA project: the Mammalian Gene Collection (MGC).</title>
        <authorList>
            <consortium name="The MGC Project Team"/>
        </authorList>
    </citation>
    <scope>NUCLEOTIDE SEQUENCE [LARGE SCALE MRNA]</scope>
    <source>
        <tissue>Lung</tissue>
    </source>
</reference>
<reference key="6">
    <citation type="journal article" date="2001" name="Cereb. Cortex">
        <title>Cerebral expression and serum detectability of secretagogin, a recently cloned EF-hand Ca(2+)-binding protein.</title>
        <authorList>
            <person name="Gartner W."/>
            <person name="Lang W."/>
            <person name="Leutmetzer F."/>
            <person name="Domanovits H."/>
            <person name="Waldhaeusl W."/>
            <person name="Wagner L."/>
        </authorList>
    </citation>
    <scope>TISSUE SPECIFICITY</scope>
</reference>
<feature type="chain" id="PRO_0000073636" description="Secretagogin">
    <location>
        <begin position="1"/>
        <end position="276"/>
    </location>
</feature>
<feature type="domain" description="EF-hand 1" evidence="2">
    <location>
        <begin position="12"/>
        <end position="47"/>
    </location>
</feature>
<feature type="domain" description="EF-hand 2" evidence="2">
    <location>
        <begin position="58"/>
        <end position="93"/>
    </location>
</feature>
<feature type="domain" description="EF-hand 3" evidence="2">
    <location>
        <begin position="105"/>
        <end position="140"/>
    </location>
</feature>
<feature type="domain" description="EF-hand 4" evidence="2">
    <location>
        <begin position="149"/>
        <end position="184"/>
    </location>
</feature>
<feature type="domain" description="EF-hand 5" evidence="2">
    <location>
        <begin position="197"/>
        <end position="232"/>
    </location>
</feature>
<feature type="domain" description="EF-hand 6" evidence="2">
    <location>
        <begin position="240"/>
        <end position="276"/>
    </location>
</feature>
<feature type="binding site" evidence="4">
    <location>
        <position position="25"/>
    </location>
    <ligand>
        <name>Ca(2+)</name>
        <dbReference type="ChEBI" id="CHEBI:29108"/>
        <label>1</label>
    </ligand>
</feature>
<feature type="binding site" evidence="4">
    <location>
        <position position="27"/>
    </location>
    <ligand>
        <name>Ca(2+)</name>
        <dbReference type="ChEBI" id="CHEBI:29108"/>
        <label>1</label>
    </ligand>
</feature>
<feature type="binding site" evidence="4">
    <location>
        <position position="31"/>
    </location>
    <ligand>
        <name>Ca(2+)</name>
        <dbReference type="ChEBI" id="CHEBI:29108"/>
        <label>1</label>
    </ligand>
</feature>
<feature type="binding site" evidence="4">
    <location>
        <position position="36"/>
    </location>
    <ligand>
        <name>Ca(2+)</name>
        <dbReference type="ChEBI" id="CHEBI:29108"/>
        <label>1</label>
    </ligand>
</feature>
<feature type="binding site" evidence="4">
    <location>
        <position position="71"/>
    </location>
    <ligand>
        <name>Ca(2+)</name>
        <dbReference type="ChEBI" id="CHEBI:29108"/>
        <label>2</label>
    </ligand>
</feature>
<feature type="binding site" evidence="4">
    <location>
        <position position="73"/>
    </location>
    <ligand>
        <name>Ca(2+)</name>
        <dbReference type="ChEBI" id="CHEBI:29108"/>
        <label>2</label>
    </ligand>
</feature>
<feature type="binding site" evidence="4">
    <location>
        <position position="75"/>
    </location>
    <ligand>
        <name>Ca(2+)</name>
        <dbReference type="ChEBI" id="CHEBI:29108"/>
        <label>2</label>
    </ligand>
</feature>
<feature type="binding site" evidence="4">
    <location>
        <position position="77"/>
    </location>
    <ligand>
        <name>Ca(2+)</name>
        <dbReference type="ChEBI" id="CHEBI:29108"/>
        <label>2</label>
    </ligand>
</feature>
<feature type="binding site" evidence="4">
    <location>
        <position position="82"/>
    </location>
    <ligand>
        <name>Ca(2+)</name>
        <dbReference type="ChEBI" id="CHEBI:29108"/>
        <label>2</label>
    </ligand>
</feature>
<feature type="binding site" evidence="2">
    <location>
        <position position="118"/>
    </location>
    <ligand>
        <name>Ca(2+)</name>
        <dbReference type="ChEBI" id="CHEBI:29108"/>
        <label>3</label>
    </ligand>
</feature>
<feature type="binding site" evidence="2">
    <location>
        <position position="120"/>
    </location>
    <ligand>
        <name>Ca(2+)</name>
        <dbReference type="ChEBI" id="CHEBI:29108"/>
        <label>3</label>
    </ligand>
</feature>
<feature type="binding site" evidence="2">
    <location>
        <position position="122"/>
    </location>
    <ligand>
        <name>Ca(2+)</name>
        <dbReference type="ChEBI" id="CHEBI:29108"/>
        <label>3</label>
    </ligand>
</feature>
<feature type="binding site" evidence="2">
    <location>
        <position position="129"/>
    </location>
    <ligand>
        <name>Ca(2+)</name>
        <dbReference type="ChEBI" id="CHEBI:29108"/>
        <label>3</label>
    </ligand>
</feature>
<feature type="binding site" evidence="2">
    <location>
        <position position="162"/>
    </location>
    <ligand>
        <name>Ca(2+)</name>
        <dbReference type="ChEBI" id="CHEBI:29108"/>
        <label>4</label>
    </ligand>
</feature>
<feature type="binding site" evidence="2">
    <location>
        <position position="164"/>
    </location>
    <ligand>
        <name>Ca(2+)</name>
        <dbReference type="ChEBI" id="CHEBI:29108"/>
        <label>4</label>
    </ligand>
</feature>
<feature type="binding site" evidence="2">
    <location>
        <position position="166"/>
    </location>
    <ligand>
        <name>Ca(2+)</name>
        <dbReference type="ChEBI" id="CHEBI:29108"/>
        <label>4</label>
    </ligand>
</feature>
<feature type="binding site" evidence="2">
    <location>
        <position position="168"/>
    </location>
    <ligand>
        <name>Ca(2+)</name>
        <dbReference type="ChEBI" id="CHEBI:29108"/>
        <label>4</label>
    </ligand>
</feature>
<feature type="binding site" evidence="2">
    <location>
        <position position="173"/>
    </location>
    <ligand>
        <name>Ca(2+)</name>
        <dbReference type="ChEBI" id="CHEBI:29108"/>
        <label>4</label>
    </ligand>
</feature>
<feature type="binding site" evidence="2">
    <location>
        <position position="210"/>
    </location>
    <ligand>
        <name>Ca(2+)</name>
        <dbReference type="ChEBI" id="CHEBI:29108"/>
        <label>5</label>
    </ligand>
</feature>
<feature type="binding site" evidence="2">
    <location>
        <position position="212"/>
    </location>
    <ligand>
        <name>Ca(2+)</name>
        <dbReference type="ChEBI" id="CHEBI:29108"/>
        <label>5</label>
    </ligand>
</feature>
<feature type="binding site" evidence="2">
    <location>
        <position position="214"/>
    </location>
    <ligand>
        <name>Ca(2+)</name>
        <dbReference type="ChEBI" id="CHEBI:29108"/>
        <label>5</label>
    </ligand>
</feature>
<feature type="binding site" evidence="2">
    <location>
        <position position="221"/>
    </location>
    <ligand>
        <name>Ca(2+)</name>
        <dbReference type="ChEBI" id="CHEBI:29108"/>
        <label>5</label>
    </ligand>
</feature>
<feature type="binding site" evidence="2">
    <location>
        <position position="254"/>
    </location>
    <ligand>
        <name>Ca(2+)</name>
        <dbReference type="ChEBI" id="CHEBI:29108"/>
        <label>6</label>
    </ligand>
</feature>
<feature type="binding site" evidence="2">
    <location>
        <position position="256"/>
    </location>
    <ligand>
        <name>Ca(2+)</name>
        <dbReference type="ChEBI" id="CHEBI:29108"/>
        <label>6</label>
    </ligand>
</feature>
<feature type="binding site" evidence="2">
    <location>
        <position position="258"/>
    </location>
    <ligand>
        <name>Ca(2+)</name>
        <dbReference type="ChEBI" id="CHEBI:29108"/>
        <label>6</label>
    </ligand>
</feature>
<feature type="binding site" evidence="2">
    <location>
        <position position="260"/>
    </location>
    <ligand>
        <name>Ca(2+)</name>
        <dbReference type="ChEBI" id="CHEBI:29108"/>
        <label>6</label>
    </ligand>
</feature>
<feature type="binding site" evidence="2">
    <location>
        <position position="265"/>
    </location>
    <ligand>
        <name>Ca(2+)</name>
        <dbReference type="ChEBI" id="CHEBI:29108"/>
        <label>6</label>
    </ligand>
</feature>
<feature type="sequence variant" id="VAR_042710" description="In dbSNP:rs6942245.">
    <original>A</original>
    <variation>V</variation>
    <location>
        <position position="216"/>
    </location>
</feature>
<feature type="sequence conflict" description="In Ref. 1; CAA76365." evidence="4" ref="1">
    <original>Q</original>
    <variation>R</variation>
    <location>
        <position position="22"/>
    </location>
</feature>
<feature type="helix" evidence="5">
    <location>
        <begin position="14"/>
        <end position="24"/>
    </location>
</feature>
<feature type="strand" evidence="5">
    <location>
        <begin position="30"/>
        <end position="33"/>
    </location>
</feature>
<feature type="helix" evidence="5">
    <location>
        <begin position="34"/>
        <end position="36"/>
    </location>
</feature>
<feature type="helix" evidence="5">
    <location>
        <begin position="37"/>
        <end position="47"/>
    </location>
</feature>
<feature type="helix" evidence="5">
    <location>
        <begin position="52"/>
        <end position="54"/>
    </location>
</feature>
<feature type="helix" evidence="5">
    <location>
        <begin position="55"/>
        <end position="68"/>
    </location>
</feature>
<feature type="strand" evidence="5">
    <location>
        <begin position="75"/>
        <end position="79"/>
    </location>
</feature>
<feature type="helix" evidence="5">
    <location>
        <begin position="80"/>
        <end position="87"/>
    </location>
</feature>
<feature type="helix" evidence="5">
    <location>
        <begin position="90"/>
        <end position="97"/>
    </location>
</feature>
<feature type="turn" evidence="5">
    <location>
        <begin position="98"/>
        <end position="101"/>
    </location>
</feature>
<feature type="helix" evidence="5">
    <location>
        <begin position="107"/>
        <end position="117"/>
    </location>
</feature>
<feature type="strand" evidence="5">
    <location>
        <begin position="123"/>
        <end position="125"/>
    </location>
</feature>
<feature type="helix" evidence="5">
    <location>
        <begin position="127"/>
        <end position="140"/>
    </location>
</feature>
<feature type="helix" evidence="5">
    <location>
        <begin position="147"/>
        <end position="161"/>
    </location>
</feature>
<feature type="helix" evidence="5">
    <location>
        <begin position="171"/>
        <end position="177"/>
    </location>
</feature>
<feature type="helix" evidence="5">
    <location>
        <begin position="184"/>
        <end position="187"/>
    </location>
</feature>
<feature type="helix" evidence="5">
    <location>
        <begin position="195"/>
        <end position="209"/>
    </location>
</feature>
<feature type="strand" evidence="5">
    <location>
        <begin position="214"/>
        <end position="217"/>
    </location>
</feature>
<feature type="helix" evidence="5">
    <location>
        <begin position="220"/>
        <end position="231"/>
    </location>
</feature>
<feature type="helix" evidence="5">
    <location>
        <begin position="239"/>
        <end position="253"/>
    </location>
</feature>
<feature type="strand" evidence="5">
    <location>
        <begin position="258"/>
        <end position="262"/>
    </location>
</feature>
<feature type="helix" evidence="5">
    <location>
        <begin position="263"/>
        <end position="269"/>
    </location>
</feature>
<organism>
    <name type="scientific">Homo sapiens</name>
    <name type="common">Human</name>
    <dbReference type="NCBI Taxonomy" id="9606"/>
    <lineage>
        <taxon>Eukaryota</taxon>
        <taxon>Metazoa</taxon>
        <taxon>Chordata</taxon>
        <taxon>Craniata</taxon>
        <taxon>Vertebrata</taxon>
        <taxon>Euteleostomi</taxon>
        <taxon>Mammalia</taxon>
        <taxon>Eutheria</taxon>
        <taxon>Euarchontoglires</taxon>
        <taxon>Primates</taxon>
        <taxon>Haplorrhini</taxon>
        <taxon>Catarrhini</taxon>
        <taxon>Hominidae</taxon>
        <taxon>Homo</taxon>
    </lineage>
</organism>
<keyword id="KW-0002">3D-structure</keyword>
<keyword id="KW-0106">Calcium</keyword>
<keyword id="KW-0963">Cytoplasm</keyword>
<keyword id="KW-0968">Cytoplasmic vesicle</keyword>
<keyword id="KW-0472">Membrane</keyword>
<keyword id="KW-0479">Metal-binding</keyword>
<keyword id="KW-1267">Proteomics identification</keyword>
<keyword id="KW-1185">Reference proteome</keyword>
<keyword id="KW-0677">Repeat</keyword>
<keyword id="KW-0964">Secreted</keyword>
<comment type="interaction">
    <interactant intactId="EBI-749420">
        <id>O76038</id>
    </interactant>
    <interactant intactId="EBI-11096309">
        <id>Q9NYB9-2</id>
        <label>ABI2</label>
    </interactant>
    <organismsDiffer>false</organismsDiffer>
    <experiments>3</experiments>
</comment>
<comment type="interaction">
    <interactant intactId="EBI-749420">
        <id>O76038</id>
    </interactant>
    <interactant intactId="EBI-745000">
        <id>O00161</id>
        <label>SNAP23</label>
    </interactant>
    <organismsDiffer>false</organismsDiffer>
    <experiments>3</experiments>
</comment>
<comment type="subcellular location">
    <subcellularLocation>
        <location>Cytoplasm</location>
    </subcellularLocation>
    <subcellularLocation>
        <location evidence="1">Secreted</location>
    </subcellularLocation>
    <subcellularLocation>
        <location evidence="1">Cytoplasmic vesicle</location>
        <location evidence="1">Secretory vesicle membrane</location>
        <topology evidence="1">Peripheral membrane protein</topology>
        <orientation evidence="1">Cytoplasmic side</orientation>
    </subcellularLocation>
    <text evidence="1">Predominantly cytoplasmic. A small proportion is associated with secretory granules and membrane fractions (By similarity). Detectable in human serum after ischemic neuronal damage.</text>
</comment>
<comment type="tissue specificity">
    <text evidence="3">Expressed at high levels in the pancreatic islets of Langerhans and to a much lesser extent in the gastrointestinal tract (stomach, small intestine and colon), the adrenal medulla and cortex and the thyroid C-cells. In the brain, the expression is restricted to distinct subtypes of neurons with highest expression in the molecular layer of the cerebellum (stellate and basket cells), in the anterior part of the pituitary gland, in the thalamus, in the hypothalamus and in a subgroup of neocortical neurons.</text>
</comment>
<evidence type="ECO:0000250" key="1"/>
<evidence type="ECO:0000255" key="2">
    <source>
        <dbReference type="PROSITE-ProRule" id="PRU00448"/>
    </source>
</evidence>
<evidence type="ECO:0000269" key="3">
    <source>
    </source>
</evidence>
<evidence type="ECO:0000305" key="4"/>
<evidence type="ECO:0007829" key="5">
    <source>
        <dbReference type="PDB" id="8BAV"/>
    </source>
</evidence>
<proteinExistence type="evidence at protein level"/>
<name>SEGN_HUMAN</name>
<protein>
    <recommendedName>
        <fullName>Secretagogin</fullName>
    </recommendedName>
</protein>
<sequence length="276" mass="32040">MDSSREPTLGRLDAAGFWQVWQRFDADEKGYIEEKELDAFFLHMLMKLGTDDTVMKANLHKVKQQFMTTQDASKDGRIRMKELAGMFLSEDENFLLLFRRENPLDSSVEFMQIWRKYDADSSGFISAAELRNFLRDLFLHHKKAISEAKLEEYTGTMMKIFDRNKDGRLDLNDLARILALQENFLLQFKMDACSTEERKRDFEKIFAYYDVSKTGALEGPEVDGFVKDMMELVQPSISGVDLDKFREILLRHCDVNKDGKIQKSELALCLGLKINP</sequence>
<accession>O76038</accession>
<accession>A8K0B2</accession>
<accession>Q5VV44</accession>
<accession>Q96QV7</accession>
<accession>Q9UJF6</accession>
<gene>
    <name type="primary">SCGN</name>
    <name type="synonym">SECRET</name>
</gene>